<accession>Q9BH08</accession>
<gene>
    <name type="primary">SRY</name>
    <name type="synonym">TDF</name>
</gene>
<keyword id="KW-0007">Acetylation</keyword>
<keyword id="KW-0010">Activator</keyword>
<keyword id="KW-0112">Calmodulin-binding</keyword>
<keyword id="KW-0963">Cytoplasm</keyword>
<keyword id="KW-0221">Differentiation</keyword>
<keyword id="KW-0238">DNA-binding</keyword>
<keyword id="KW-0539">Nucleus</keyword>
<keyword id="KW-0678">Repressor</keyword>
<keyword id="KW-0726">Sexual differentiation</keyword>
<keyword id="KW-0804">Transcription</keyword>
<keyword id="KW-0805">Transcription regulation</keyword>
<protein>
    <recommendedName>
        <fullName>Sex-determining region Y protein</fullName>
    </recommendedName>
    <alternativeName>
        <fullName>Testis-determining factor</fullName>
    </alternativeName>
</protein>
<comment type="function">
    <text evidence="1 2">Transcriptional regulator that controls a genetic switch in male development. It is necessary and sufficient for initiating male sex determination by directing the development of supporting cell precursors (pre-Sertoli cells) as Sertoli rather than granulosa cells. Involved in different aspects of gene regulation including promoter activation or repression. Binds to the DNA consensus sequence 5'-[AT]AACAA[AT]-3'. SRY HMG box recognizes DNA by partial intercalation in the minor groove and promotes DNA bending. Also involved in pre-mRNA splicing (By similarity). In male adult brain involved in the maintenance of motor functions of dopaminergic neurons (By similarity).</text>
</comment>
<comment type="subunit">
    <text evidence="2">Interacts with CALM, EP300, HDAC3, KPNB1, ZNF208 isoform KRAB-O, PARP1, SLC9A3R2 and WT1. The interaction with EP300 modulates its DNA-binding activity. The interaction with KPNB1 is sensitive to dissociation by Ran in the GTP-bound form. Interaction with PARP1 impaired its DNA-binding activity.</text>
</comment>
<comment type="subcellular location">
    <subcellularLocation>
        <location evidence="2">Nucleus speckle</location>
    </subcellularLocation>
    <subcellularLocation>
        <location evidence="2">Cytoplasm</location>
    </subcellularLocation>
    <subcellularLocation>
        <location evidence="2">Nucleus</location>
    </subcellularLocation>
</comment>
<comment type="PTM">
    <text evidence="2">Acetylation of Lys-130 contributes to its nuclear localization and enhances its interaction with KPNB1. Deacetylated by HDAC3.</text>
</comment>
<comment type="similarity">
    <text evidence="4">Belongs to the SRY family.</text>
</comment>
<comment type="online information" name="Protein Spotlight">
    <link uri="https://www.proteinspotlight.org/back_issues/080"/>
    <text>The tenuous nature of sex - Issue 80 of March 2007</text>
</comment>
<proteinExistence type="inferred from homology"/>
<evidence type="ECO:0000250" key="1">
    <source>
        <dbReference type="UniProtKB" id="P36394"/>
    </source>
</evidence>
<evidence type="ECO:0000250" key="2">
    <source>
        <dbReference type="UniProtKB" id="Q05066"/>
    </source>
</evidence>
<evidence type="ECO:0000255" key="3">
    <source>
        <dbReference type="PROSITE-ProRule" id="PRU00267"/>
    </source>
</evidence>
<evidence type="ECO:0000305" key="4"/>
<name>SRY_CERNI</name>
<dbReference type="EMBL" id="AB046700">
    <property type="protein sequence ID" value="BAB21566.1"/>
    <property type="molecule type" value="Genomic_DNA"/>
</dbReference>
<dbReference type="SMR" id="Q9BH08"/>
<dbReference type="GO" id="GO:0005737">
    <property type="term" value="C:cytoplasm"/>
    <property type="evidence" value="ECO:0007669"/>
    <property type="project" value="UniProtKB-SubCell"/>
</dbReference>
<dbReference type="GO" id="GO:0016607">
    <property type="term" value="C:nuclear speck"/>
    <property type="evidence" value="ECO:0007669"/>
    <property type="project" value="UniProtKB-SubCell"/>
</dbReference>
<dbReference type="GO" id="GO:0005634">
    <property type="term" value="C:nucleus"/>
    <property type="evidence" value="ECO:0000250"/>
    <property type="project" value="UniProtKB"/>
</dbReference>
<dbReference type="GO" id="GO:0005516">
    <property type="term" value="F:calmodulin binding"/>
    <property type="evidence" value="ECO:0007669"/>
    <property type="project" value="UniProtKB-KW"/>
</dbReference>
<dbReference type="GO" id="GO:0001228">
    <property type="term" value="F:DNA-binding transcription activator activity, RNA polymerase II-specific"/>
    <property type="evidence" value="ECO:0007669"/>
    <property type="project" value="TreeGrafter"/>
</dbReference>
<dbReference type="GO" id="GO:0000978">
    <property type="term" value="F:RNA polymerase II cis-regulatory region sequence-specific DNA binding"/>
    <property type="evidence" value="ECO:0007669"/>
    <property type="project" value="TreeGrafter"/>
</dbReference>
<dbReference type="GO" id="GO:0030154">
    <property type="term" value="P:cell differentiation"/>
    <property type="evidence" value="ECO:0007669"/>
    <property type="project" value="UniProtKB-KW"/>
</dbReference>
<dbReference type="GO" id="GO:0030238">
    <property type="term" value="P:male sex determination"/>
    <property type="evidence" value="ECO:0007669"/>
    <property type="project" value="InterPro"/>
</dbReference>
<dbReference type="GO" id="GO:0007548">
    <property type="term" value="P:sex differentiation"/>
    <property type="evidence" value="ECO:0007669"/>
    <property type="project" value="UniProtKB-KW"/>
</dbReference>
<dbReference type="CDD" id="cd22028">
    <property type="entry name" value="HMG-box_SoxA_SoxB_SoxG"/>
    <property type="match status" value="1"/>
</dbReference>
<dbReference type="FunFam" id="1.10.30.10:FF:000002">
    <property type="entry name" value="transcription factor Sox-2"/>
    <property type="match status" value="1"/>
</dbReference>
<dbReference type="Gene3D" id="1.10.30.10">
    <property type="entry name" value="High mobility group box domain"/>
    <property type="match status" value="1"/>
</dbReference>
<dbReference type="InterPro" id="IPR009071">
    <property type="entry name" value="HMG_box_dom"/>
</dbReference>
<dbReference type="InterPro" id="IPR036910">
    <property type="entry name" value="HMG_box_dom_sf"/>
</dbReference>
<dbReference type="InterPro" id="IPR017253">
    <property type="entry name" value="SRY"/>
</dbReference>
<dbReference type="InterPro" id="IPR050140">
    <property type="entry name" value="SRY-related_HMG-box_TF-like"/>
</dbReference>
<dbReference type="PANTHER" id="PTHR10270:SF161">
    <property type="entry name" value="SEX-DETERMINING REGION Y PROTEIN"/>
    <property type="match status" value="1"/>
</dbReference>
<dbReference type="PANTHER" id="PTHR10270">
    <property type="entry name" value="SOX TRANSCRIPTION FACTOR"/>
    <property type="match status" value="1"/>
</dbReference>
<dbReference type="Pfam" id="PF00505">
    <property type="entry name" value="HMG_box"/>
    <property type="match status" value="1"/>
</dbReference>
<dbReference type="PIRSF" id="PIRSF037653">
    <property type="entry name" value="SRY"/>
    <property type="match status" value="1"/>
</dbReference>
<dbReference type="SMART" id="SM00398">
    <property type="entry name" value="HMG"/>
    <property type="match status" value="1"/>
</dbReference>
<dbReference type="SUPFAM" id="SSF47095">
    <property type="entry name" value="HMG-box"/>
    <property type="match status" value="1"/>
</dbReference>
<dbReference type="PROSITE" id="PS50118">
    <property type="entry name" value="HMG_BOX_2"/>
    <property type="match status" value="1"/>
</dbReference>
<sequence>MFRVLNDDVYSPAEIQQQNPLAFGKASSLFTDNRSANDQCETGENVRESGQDHVKRPMNAFIVWSRERRRKVALENPQMQNSEISKQLGYEWKRLTDAEKRPFFEEAQRLLAVHRDKYPGYKYRPRRKTKRQQKLLPADSSKQCKQMHIETLQPFTYRYGCANTTGSRMESQLSLSQSVTITNSFFQNEHHSSWTNLGHNRVTLATQISADFPFYQSLQPGLSCAYFQY</sequence>
<feature type="chain" id="PRO_0000048655" description="Sex-determining region Y protein">
    <location>
        <begin position="1"/>
        <end position="229"/>
    </location>
</feature>
<feature type="DNA-binding region" description="HMG box" evidence="3">
    <location>
        <begin position="54"/>
        <end position="122"/>
    </location>
</feature>
<reference key="1">
    <citation type="submission" date="2000-07" db="EMBL/GenBank/DDBJ databases">
        <title>Sex determination of Japanese sika deer using DNA extracted from a tooth.</title>
        <authorList>
            <person name="Fukui E."/>
            <person name="Koganezawa M."/>
            <person name="Yoshizawa M."/>
        </authorList>
    </citation>
    <scope>NUCLEOTIDE SEQUENCE [GENOMIC DNA]</scope>
</reference>
<organism>
    <name type="scientific">Cervus nippon</name>
    <name type="common">Sika deer</name>
    <dbReference type="NCBI Taxonomy" id="9863"/>
    <lineage>
        <taxon>Eukaryota</taxon>
        <taxon>Metazoa</taxon>
        <taxon>Chordata</taxon>
        <taxon>Craniata</taxon>
        <taxon>Vertebrata</taxon>
        <taxon>Euteleostomi</taxon>
        <taxon>Mammalia</taxon>
        <taxon>Eutheria</taxon>
        <taxon>Laurasiatheria</taxon>
        <taxon>Artiodactyla</taxon>
        <taxon>Ruminantia</taxon>
        <taxon>Pecora</taxon>
        <taxon>Cervidae</taxon>
        <taxon>Cervinae</taxon>
        <taxon>Cervus</taxon>
    </lineage>
</organism>